<evidence type="ECO:0000255" key="1">
    <source>
        <dbReference type="HAMAP-Rule" id="MF_00443"/>
    </source>
</evidence>
<feature type="chain" id="PRO_0000162796" description="Thiazole synthase">
    <location>
        <begin position="1"/>
        <end position="256"/>
    </location>
</feature>
<feature type="active site" description="Schiff-base intermediate with DXP" evidence="1">
    <location>
        <position position="96"/>
    </location>
</feature>
<feature type="binding site" evidence="1">
    <location>
        <position position="157"/>
    </location>
    <ligand>
        <name>1-deoxy-D-xylulose 5-phosphate</name>
        <dbReference type="ChEBI" id="CHEBI:57792"/>
    </ligand>
</feature>
<feature type="binding site" evidence="1">
    <location>
        <begin position="184"/>
        <end position="185"/>
    </location>
    <ligand>
        <name>1-deoxy-D-xylulose 5-phosphate</name>
        <dbReference type="ChEBI" id="CHEBI:57792"/>
    </ligand>
</feature>
<feature type="binding site" evidence="1">
    <location>
        <begin position="206"/>
        <end position="207"/>
    </location>
    <ligand>
        <name>1-deoxy-D-xylulose 5-phosphate</name>
        <dbReference type="ChEBI" id="CHEBI:57792"/>
    </ligand>
</feature>
<gene>
    <name evidence="1" type="primary">thiG</name>
    <name type="ordered locus">BruAb1_0210</name>
</gene>
<reference key="1">
    <citation type="journal article" date="2005" name="J. Bacteriol.">
        <title>Completion of the genome sequence of Brucella abortus and comparison to the highly similar genomes of Brucella melitensis and Brucella suis.</title>
        <authorList>
            <person name="Halling S.M."/>
            <person name="Peterson-Burch B.D."/>
            <person name="Bricker B.J."/>
            <person name="Zuerner R.L."/>
            <person name="Qing Z."/>
            <person name="Li L.-L."/>
            <person name="Kapur V."/>
            <person name="Alt D.P."/>
            <person name="Olsen S.C."/>
        </authorList>
    </citation>
    <scope>NUCLEOTIDE SEQUENCE [LARGE SCALE GENOMIC DNA]</scope>
    <source>
        <strain>9-941</strain>
    </source>
</reference>
<proteinExistence type="inferred from homology"/>
<comment type="function">
    <text evidence="1">Catalyzes the rearrangement of 1-deoxy-D-xylulose 5-phosphate (DXP) to produce the thiazole phosphate moiety of thiamine. Sulfur is provided by the thiocarboxylate moiety of the carrier protein ThiS. In vitro, sulfur can be provided by H(2)S.</text>
</comment>
<comment type="catalytic activity">
    <reaction evidence="1">
        <text>[ThiS sulfur-carrier protein]-C-terminal-Gly-aminoethanethioate + 2-iminoacetate + 1-deoxy-D-xylulose 5-phosphate = [ThiS sulfur-carrier protein]-C-terminal Gly-Gly + 2-[(2R,5Z)-2-carboxy-4-methylthiazol-5(2H)-ylidene]ethyl phosphate + 2 H2O + H(+)</text>
        <dbReference type="Rhea" id="RHEA:26297"/>
        <dbReference type="Rhea" id="RHEA-COMP:12909"/>
        <dbReference type="Rhea" id="RHEA-COMP:19908"/>
        <dbReference type="ChEBI" id="CHEBI:15377"/>
        <dbReference type="ChEBI" id="CHEBI:15378"/>
        <dbReference type="ChEBI" id="CHEBI:57792"/>
        <dbReference type="ChEBI" id="CHEBI:62899"/>
        <dbReference type="ChEBI" id="CHEBI:77846"/>
        <dbReference type="ChEBI" id="CHEBI:90778"/>
        <dbReference type="ChEBI" id="CHEBI:232372"/>
        <dbReference type="EC" id="2.8.1.10"/>
    </reaction>
</comment>
<comment type="pathway">
    <text evidence="1">Cofactor biosynthesis; thiamine diphosphate biosynthesis.</text>
</comment>
<comment type="subunit">
    <text evidence="1">Homotetramer. Forms heterodimers with either ThiH or ThiS.</text>
</comment>
<comment type="subcellular location">
    <subcellularLocation>
        <location evidence="1">Cytoplasm</location>
    </subcellularLocation>
</comment>
<comment type="similarity">
    <text evidence="1">Belongs to the ThiG family.</text>
</comment>
<accession>Q57FG5</accession>
<organism>
    <name type="scientific">Brucella abortus biovar 1 (strain 9-941)</name>
    <dbReference type="NCBI Taxonomy" id="262698"/>
    <lineage>
        <taxon>Bacteria</taxon>
        <taxon>Pseudomonadati</taxon>
        <taxon>Pseudomonadota</taxon>
        <taxon>Alphaproteobacteria</taxon>
        <taxon>Hyphomicrobiales</taxon>
        <taxon>Brucellaceae</taxon>
        <taxon>Brucella/Ochrobactrum group</taxon>
        <taxon>Brucella</taxon>
    </lineage>
</organism>
<keyword id="KW-0963">Cytoplasm</keyword>
<keyword id="KW-0704">Schiff base</keyword>
<keyword id="KW-0784">Thiamine biosynthesis</keyword>
<keyword id="KW-0808">Transferase</keyword>
<sequence>MLEFYGKRFESRLLLGTAQYPSPSILADAVRASLSRIVTVSLRRESGEARAGQDFWALIKALGVAVLPNTAGCHTPREAITTAHMAREVFGTNWIKLEVIGDTDTLQPDPFGLVEAARILCDEGFEVFPYMNDDLIVAERLIEAGCKVLMPWGAPIGSGRGLNNPYALKTMRAHFPDIPLVVDAGIGVPSHAAAAMELGFDAVLINTAVAKAGDPAAMARAFALAVEAGRLAYEADPIEARDMASPSTPLLGKAFL</sequence>
<protein>
    <recommendedName>
        <fullName evidence="1">Thiazole synthase</fullName>
        <ecNumber evidence="1">2.8.1.10</ecNumber>
    </recommendedName>
</protein>
<name>THIG_BRUAB</name>
<dbReference type="EC" id="2.8.1.10" evidence="1"/>
<dbReference type="EMBL" id="AE017223">
    <property type="protein sequence ID" value="AAX73619.1"/>
    <property type="molecule type" value="Genomic_DNA"/>
</dbReference>
<dbReference type="RefSeq" id="WP_002965462.1">
    <property type="nucleotide sequence ID" value="NC_006932.1"/>
</dbReference>
<dbReference type="SMR" id="Q57FG5"/>
<dbReference type="EnsemblBacteria" id="AAX73619">
    <property type="protein sequence ID" value="AAX73619"/>
    <property type="gene ID" value="BruAb1_0210"/>
</dbReference>
<dbReference type="KEGG" id="bmb:BruAb1_0210"/>
<dbReference type="HOGENOM" id="CLU_062233_1_0_5"/>
<dbReference type="UniPathway" id="UPA00060"/>
<dbReference type="Proteomes" id="UP000000540">
    <property type="component" value="Chromosome I"/>
</dbReference>
<dbReference type="GO" id="GO:0005737">
    <property type="term" value="C:cytoplasm"/>
    <property type="evidence" value="ECO:0007669"/>
    <property type="project" value="UniProtKB-SubCell"/>
</dbReference>
<dbReference type="GO" id="GO:1990107">
    <property type="term" value="F:thiazole synthase activity"/>
    <property type="evidence" value="ECO:0007669"/>
    <property type="project" value="UniProtKB-EC"/>
</dbReference>
<dbReference type="GO" id="GO:0009229">
    <property type="term" value="P:thiamine diphosphate biosynthetic process"/>
    <property type="evidence" value="ECO:0007669"/>
    <property type="project" value="UniProtKB-UniRule"/>
</dbReference>
<dbReference type="CDD" id="cd04728">
    <property type="entry name" value="ThiG"/>
    <property type="match status" value="1"/>
</dbReference>
<dbReference type="Gene3D" id="3.20.20.70">
    <property type="entry name" value="Aldolase class I"/>
    <property type="match status" value="1"/>
</dbReference>
<dbReference type="HAMAP" id="MF_00443">
    <property type="entry name" value="ThiG"/>
    <property type="match status" value="1"/>
</dbReference>
<dbReference type="InterPro" id="IPR013785">
    <property type="entry name" value="Aldolase_TIM"/>
</dbReference>
<dbReference type="InterPro" id="IPR033983">
    <property type="entry name" value="Thiazole_synthase_ThiG"/>
</dbReference>
<dbReference type="InterPro" id="IPR008867">
    <property type="entry name" value="ThiG"/>
</dbReference>
<dbReference type="PANTHER" id="PTHR34266">
    <property type="entry name" value="THIAZOLE SYNTHASE"/>
    <property type="match status" value="1"/>
</dbReference>
<dbReference type="PANTHER" id="PTHR34266:SF2">
    <property type="entry name" value="THIAZOLE SYNTHASE"/>
    <property type="match status" value="1"/>
</dbReference>
<dbReference type="Pfam" id="PF05690">
    <property type="entry name" value="ThiG"/>
    <property type="match status" value="1"/>
</dbReference>
<dbReference type="SUPFAM" id="SSF110399">
    <property type="entry name" value="ThiG-like"/>
    <property type="match status" value="1"/>
</dbReference>